<name>AROA_VIBCH</name>
<evidence type="ECO:0000255" key="1">
    <source>
        <dbReference type="HAMAP-Rule" id="MF_00210"/>
    </source>
</evidence>
<evidence type="ECO:0000269" key="2">
    <source ref="2"/>
</evidence>
<evidence type="ECO:0000269" key="3">
    <source ref="3"/>
</evidence>
<evidence type="ECO:0007744" key="4">
    <source>
        <dbReference type="PDB" id="3NVS"/>
    </source>
</evidence>
<evidence type="ECO:0007744" key="5">
    <source>
        <dbReference type="PDB" id="3TI2"/>
    </source>
</evidence>
<evidence type="ECO:0007829" key="6">
    <source>
        <dbReference type="PDB" id="3NVS"/>
    </source>
</evidence>
<protein>
    <recommendedName>
        <fullName evidence="1">3-phosphoshikimate 1-carboxyvinyltransferase</fullName>
        <ecNumber evidence="1">2.5.1.19</ecNumber>
    </recommendedName>
    <alternativeName>
        <fullName evidence="1">5-enolpyruvylshikimate-3-phosphate synthase</fullName>
        <shortName evidence="1">EPSP synthase</shortName>
        <shortName evidence="1">EPSPS</shortName>
    </alternativeName>
</protein>
<dbReference type="EC" id="2.5.1.19" evidence="1"/>
<dbReference type="EMBL" id="AE003852">
    <property type="protein sequence ID" value="AAF94882.1"/>
    <property type="molecule type" value="Genomic_DNA"/>
</dbReference>
<dbReference type="PIR" id="D82163">
    <property type="entry name" value="D82163"/>
</dbReference>
<dbReference type="RefSeq" id="NP_231368.1">
    <property type="nucleotide sequence ID" value="NC_002505.1"/>
</dbReference>
<dbReference type="RefSeq" id="WP_000445261.1">
    <property type="nucleotide sequence ID" value="NZ_LT906614.1"/>
</dbReference>
<dbReference type="PDB" id="3NVS">
    <property type="method" value="X-ray"/>
    <property type="resolution" value="1.02 A"/>
    <property type="chains" value="A=1-426"/>
</dbReference>
<dbReference type="PDB" id="3TI2">
    <property type="method" value="X-ray"/>
    <property type="resolution" value="1.90 A"/>
    <property type="chains" value="A/B/C/D=16-243"/>
</dbReference>
<dbReference type="PDBsum" id="3NVS"/>
<dbReference type="PDBsum" id="3TI2"/>
<dbReference type="SMR" id="Q9KRB0"/>
<dbReference type="STRING" id="243277.VC_1732"/>
<dbReference type="DNASU" id="2613737"/>
<dbReference type="EnsemblBacteria" id="AAF94882">
    <property type="protein sequence ID" value="AAF94882"/>
    <property type="gene ID" value="VC_1732"/>
</dbReference>
<dbReference type="KEGG" id="vch:VC_1732"/>
<dbReference type="PATRIC" id="fig|243277.26.peg.1657"/>
<dbReference type="eggNOG" id="COG0128">
    <property type="taxonomic scope" value="Bacteria"/>
</dbReference>
<dbReference type="HOGENOM" id="CLU_024321_0_0_6"/>
<dbReference type="BRENDA" id="2.5.1.19">
    <property type="organism ID" value="15862"/>
</dbReference>
<dbReference type="UniPathway" id="UPA00053">
    <property type="reaction ID" value="UER00089"/>
</dbReference>
<dbReference type="EvolutionaryTrace" id="Q9KRB0"/>
<dbReference type="Proteomes" id="UP000000584">
    <property type="component" value="Chromosome 1"/>
</dbReference>
<dbReference type="GO" id="GO:0005737">
    <property type="term" value="C:cytoplasm"/>
    <property type="evidence" value="ECO:0007669"/>
    <property type="project" value="UniProtKB-SubCell"/>
</dbReference>
<dbReference type="GO" id="GO:0003866">
    <property type="term" value="F:3-phosphoshikimate 1-carboxyvinyltransferase activity"/>
    <property type="evidence" value="ECO:0000318"/>
    <property type="project" value="GO_Central"/>
</dbReference>
<dbReference type="GO" id="GO:0008652">
    <property type="term" value="P:amino acid biosynthetic process"/>
    <property type="evidence" value="ECO:0007669"/>
    <property type="project" value="UniProtKB-KW"/>
</dbReference>
<dbReference type="GO" id="GO:0009073">
    <property type="term" value="P:aromatic amino acid family biosynthetic process"/>
    <property type="evidence" value="ECO:0007669"/>
    <property type="project" value="UniProtKB-KW"/>
</dbReference>
<dbReference type="GO" id="GO:0009423">
    <property type="term" value="P:chorismate biosynthetic process"/>
    <property type="evidence" value="ECO:0000318"/>
    <property type="project" value="GO_Central"/>
</dbReference>
<dbReference type="CDD" id="cd01556">
    <property type="entry name" value="EPSP_synthase"/>
    <property type="match status" value="1"/>
</dbReference>
<dbReference type="FunFam" id="3.65.10.10:FF:000003">
    <property type="entry name" value="3-phosphoshikimate 1-carboxyvinyltransferase"/>
    <property type="match status" value="1"/>
</dbReference>
<dbReference type="FunFam" id="3.65.10.10:FF:000004">
    <property type="entry name" value="3-phosphoshikimate 1-carboxyvinyltransferase"/>
    <property type="match status" value="1"/>
</dbReference>
<dbReference type="Gene3D" id="3.65.10.10">
    <property type="entry name" value="Enolpyruvate transferase domain"/>
    <property type="match status" value="2"/>
</dbReference>
<dbReference type="HAMAP" id="MF_00210">
    <property type="entry name" value="EPSP_synth"/>
    <property type="match status" value="1"/>
</dbReference>
<dbReference type="InterPro" id="IPR001986">
    <property type="entry name" value="Enolpyruvate_Tfrase_dom"/>
</dbReference>
<dbReference type="InterPro" id="IPR036968">
    <property type="entry name" value="Enolpyruvate_Tfrase_sf"/>
</dbReference>
<dbReference type="InterPro" id="IPR006264">
    <property type="entry name" value="EPSP_synthase"/>
</dbReference>
<dbReference type="InterPro" id="IPR023193">
    <property type="entry name" value="EPSP_synthase_CS"/>
</dbReference>
<dbReference type="InterPro" id="IPR013792">
    <property type="entry name" value="RNA3'P_cycl/enolpyr_Trfase_a/b"/>
</dbReference>
<dbReference type="NCBIfam" id="TIGR01356">
    <property type="entry name" value="aroA"/>
    <property type="match status" value="1"/>
</dbReference>
<dbReference type="PANTHER" id="PTHR21090">
    <property type="entry name" value="AROM/DEHYDROQUINATE SYNTHASE"/>
    <property type="match status" value="1"/>
</dbReference>
<dbReference type="PANTHER" id="PTHR21090:SF5">
    <property type="entry name" value="PENTAFUNCTIONAL AROM POLYPEPTIDE"/>
    <property type="match status" value="1"/>
</dbReference>
<dbReference type="Pfam" id="PF00275">
    <property type="entry name" value="EPSP_synthase"/>
    <property type="match status" value="1"/>
</dbReference>
<dbReference type="PIRSF" id="PIRSF000505">
    <property type="entry name" value="EPSPS"/>
    <property type="match status" value="1"/>
</dbReference>
<dbReference type="SUPFAM" id="SSF55205">
    <property type="entry name" value="EPT/RTPC-like"/>
    <property type="match status" value="1"/>
</dbReference>
<dbReference type="PROSITE" id="PS00104">
    <property type="entry name" value="EPSP_SYNTHASE_1"/>
    <property type="match status" value="1"/>
</dbReference>
<dbReference type="PROSITE" id="PS00885">
    <property type="entry name" value="EPSP_SYNTHASE_2"/>
    <property type="match status" value="1"/>
</dbReference>
<sequence length="426" mass="46102">MESLTLQPIELISGEVNLPGSKSVSNRALLLAALASGTTRLTNLLDSDDIRHMLNALTKLGVNYRLSADKTTCEVEGLGQAFHTTQPLELFLGNAGTAMRPLAAALCLGQGDYVLTGEPRMKERPIGHLVDALRQAGAQIEYLEQENFPPLRIQGTGLQAGTVTIDGSISSQFLTAFLMSAPLAQGKVTIKIVGELVSKPYIDITLHIMEQFGVQVINHDYQEFVIPAGQSYVSPGQFLVEGDASSASYFLAAAAIKGGEVKVTGIGKNSIQGDIQFADALEKMGAQIEWGDDYVIARRGELNAVDLDFNHIPDAAMTIATTALFAKGTTAIRNVYNWRVKETDRLAAMATELRKVGATVEEGEDFIVITPPTKLIHAAIDTYDDHRMAMCFSLVALSDTPVTINDPKCTSKTFPDYFDKFAQLSR</sequence>
<organism>
    <name type="scientific">Vibrio cholerae serotype O1 (strain ATCC 39315 / El Tor Inaba N16961)</name>
    <dbReference type="NCBI Taxonomy" id="243277"/>
    <lineage>
        <taxon>Bacteria</taxon>
        <taxon>Pseudomonadati</taxon>
        <taxon>Pseudomonadota</taxon>
        <taxon>Gammaproteobacteria</taxon>
        <taxon>Vibrionales</taxon>
        <taxon>Vibrionaceae</taxon>
        <taxon>Vibrio</taxon>
    </lineage>
</organism>
<comment type="function">
    <text evidence="1">Catalyzes the transfer of the enolpyruvyl moiety of phosphoenolpyruvate (PEP) to the 5-hydroxyl of shikimate-3-phosphate (S3P) to produce enolpyruvyl shikimate-3-phosphate and inorganic phosphate.</text>
</comment>
<comment type="catalytic activity">
    <reaction evidence="1">
        <text>3-phosphoshikimate + phosphoenolpyruvate = 5-O-(1-carboxyvinyl)-3-phosphoshikimate + phosphate</text>
        <dbReference type="Rhea" id="RHEA:21256"/>
        <dbReference type="ChEBI" id="CHEBI:43474"/>
        <dbReference type="ChEBI" id="CHEBI:57701"/>
        <dbReference type="ChEBI" id="CHEBI:58702"/>
        <dbReference type="ChEBI" id="CHEBI:145989"/>
        <dbReference type="EC" id="2.5.1.19"/>
    </reaction>
    <physiologicalReaction direction="left-to-right" evidence="1">
        <dbReference type="Rhea" id="RHEA:21257"/>
    </physiologicalReaction>
</comment>
<comment type="pathway">
    <text evidence="1">Metabolic intermediate biosynthesis; chorismate biosynthesis; chorismate from D-erythrose 4-phosphate and phosphoenolpyruvate: step 6/7.</text>
</comment>
<comment type="subunit">
    <text evidence="3">Homotetramer.</text>
</comment>
<comment type="subcellular location">
    <subcellularLocation>
        <location evidence="1">Cytoplasm</location>
    </subcellularLocation>
</comment>
<comment type="similarity">
    <text evidence="1">Belongs to the EPSP synthase family.</text>
</comment>
<accession>Q9KRB0</accession>
<proteinExistence type="evidence at protein level"/>
<feature type="chain" id="PRO_0000088314" description="3-phosphoshikimate 1-carboxyvinyltransferase">
    <location>
        <begin position="1"/>
        <end position="426"/>
    </location>
</feature>
<feature type="active site" description="Proton acceptor" evidence="1">
    <location>
        <position position="314"/>
    </location>
</feature>
<feature type="binding site" evidence="2 4">
    <location>
        <position position="22"/>
    </location>
    <ligand>
        <name>3-phosphoshikimate</name>
        <dbReference type="ChEBI" id="CHEBI:145989"/>
    </ligand>
</feature>
<feature type="binding site" evidence="1">
    <location>
        <position position="22"/>
    </location>
    <ligand>
        <name>phosphoenolpyruvate</name>
        <dbReference type="ChEBI" id="CHEBI:58702"/>
    </ligand>
</feature>
<feature type="binding site" evidence="2 4">
    <location>
        <position position="23"/>
    </location>
    <ligand>
        <name>3-phosphoshikimate</name>
        <dbReference type="ChEBI" id="CHEBI:145989"/>
    </ligand>
</feature>
<feature type="binding site" evidence="2 4">
    <location>
        <position position="27"/>
    </location>
    <ligand>
        <name>3-phosphoshikimate</name>
        <dbReference type="ChEBI" id="CHEBI:145989"/>
    </ligand>
</feature>
<feature type="binding site" evidence="1">
    <location>
        <position position="96"/>
    </location>
    <ligand>
        <name>phosphoenolpyruvate</name>
        <dbReference type="ChEBI" id="CHEBI:58702"/>
    </ligand>
</feature>
<feature type="binding site" evidence="1">
    <location>
        <position position="124"/>
    </location>
    <ligand>
        <name>phosphoenolpyruvate</name>
        <dbReference type="ChEBI" id="CHEBI:58702"/>
    </ligand>
</feature>
<feature type="binding site" evidence="2 4">
    <location>
        <position position="170"/>
    </location>
    <ligand>
        <name>3-phosphoshikimate</name>
        <dbReference type="ChEBI" id="CHEBI:145989"/>
    </ligand>
</feature>
<feature type="binding site" evidence="2 4">
    <location>
        <position position="171"/>
    </location>
    <ligand>
        <name>3-phosphoshikimate</name>
        <dbReference type="ChEBI" id="CHEBI:145989"/>
    </ligand>
</feature>
<feature type="binding site" evidence="1">
    <location>
        <position position="172"/>
    </location>
    <ligand>
        <name>phosphoenolpyruvate</name>
        <dbReference type="ChEBI" id="CHEBI:58702"/>
    </ligand>
</feature>
<feature type="binding site" evidence="2 4">
    <location>
        <position position="198"/>
    </location>
    <ligand>
        <name>3-phosphoshikimate</name>
        <dbReference type="ChEBI" id="CHEBI:145989"/>
    </ligand>
</feature>
<feature type="binding site" evidence="2 4">
    <location>
        <position position="314"/>
    </location>
    <ligand>
        <name>3-phosphoshikimate</name>
        <dbReference type="ChEBI" id="CHEBI:145989"/>
    </ligand>
</feature>
<feature type="binding site" evidence="2 4">
    <location>
        <position position="337"/>
    </location>
    <ligand>
        <name>3-phosphoshikimate</name>
        <dbReference type="ChEBI" id="CHEBI:145989"/>
    </ligand>
</feature>
<feature type="binding site" evidence="2 4">
    <location>
        <position position="341"/>
    </location>
    <ligand>
        <name>3-phosphoshikimate</name>
        <dbReference type="ChEBI" id="CHEBI:145989"/>
    </ligand>
</feature>
<feature type="binding site" evidence="1">
    <location>
        <position position="345"/>
    </location>
    <ligand>
        <name>phosphoenolpyruvate</name>
        <dbReference type="ChEBI" id="CHEBI:58702"/>
    </ligand>
</feature>
<feature type="binding site" evidence="1">
    <location>
        <position position="387"/>
    </location>
    <ligand>
        <name>phosphoenolpyruvate</name>
        <dbReference type="ChEBI" id="CHEBI:58702"/>
    </ligand>
</feature>
<feature type="binding site" evidence="1">
    <location>
        <position position="412"/>
    </location>
    <ligand>
        <name>phosphoenolpyruvate</name>
        <dbReference type="ChEBI" id="CHEBI:58702"/>
    </ligand>
</feature>
<feature type="strand" evidence="6">
    <location>
        <begin position="3"/>
        <end position="6"/>
    </location>
</feature>
<feature type="strand" evidence="6">
    <location>
        <begin position="14"/>
        <end position="17"/>
    </location>
</feature>
<feature type="helix" evidence="6">
    <location>
        <begin position="22"/>
        <end position="34"/>
    </location>
</feature>
<feature type="strand" evidence="6">
    <location>
        <begin position="35"/>
        <end position="43"/>
    </location>
</feature>
<feature type="helix" evidence="6">
    <location>
        <begin position="48"/>
        <end position="59"/>
    </location>
</feature>
<feature type="strand" evidence="6">
    <location>
        <begin position="63"/>
        <end position="66"/>
    </location>
</feature>
<feature type="strand" evidence="6">
    <location>
        <begin position="73"/>
        <end position="76"/>
    </location>
</feature>
<feature type="strand" evidence="6">
    <location>
        <begin position="88"/>
        <end position="91"/>
    </location>
</feature>
<feature type="helix" evidence="6">
    <location>
        <begin position="96"/>
        <end position="105"/>
    </location>
</feature>
<feature type="strand" evidence="6">
    <location>
        <begin position="108"/>
        <end position="110"/>
    </location>
</feature>
<feature type="strand" evidence="6">
    <location>
        <begin position="112"/>
        <end position="116"/>
    </location>
</feature>
<feature type="helix" evidence="6">
    <location>
        <begin position="119"/>
        <end position="123"/>
    </location>
</feature>
<feature type="helix" evidence="6">
    <location>
        <begin position="127"/>
        <end position="135"/>
    </location>
</feature>
<feature type="strand" evidence="6">
    <location>
        <begin position="139"/>
        <end position="145"/>
    </location>
</feature>
<feature type="strand" evidence="6">
    <location>
        <begin position="151"/>
        <end position="154"/>
    </location>
</feature>
<feature type="strand" evidence="6">
    <location>
        <begin position="160"/>
        <end position="165"/>
    </location>
</feature>
<feature type="helix" evidence="6">
    <location>
        <begin position="172"/>
        <end position="180"/>
    </location>
</feature>
<feature type="helix" evidence="6">
    <location>
        <begin position="181"/>
        <end position="183"/>
    </location>
</feature>
<feature type="strand" evidence="6">
    <location>
        <begin position="184"/>
        <end position="186"/>
    </location>
</feature>
<feature type="strand" evidence="6">
    <location>
        <begin position="188"/>
        <end position="194"/>
    </location>
</feature>
<feature type="helix" evidence="6">
    <location>
        <begin position="199"/>
        <end position="211"/>
    </location>
</feature>
<feature type="strand" evidence="6">
    <location>
        <begin position="217"/>
        <end position="219"/>
    </location>
</feature>
<feature type="turn" evidence="6">
    <location>
        <begin position="220"/>
        <end position="222"/>
    </location>
</feature>
<feature type="strand" evidence="6">
    <location>
        <begin position="223"/>
        <end position="226"/>
    </location>
</feature>
<feature type="strand" evidence="6">
    <location>
        <begin position="236"/>
        <end position="239"/>
    </location>
</feature>
<feature type="helix" evidence="6">
    <location>
        <begin position="244"/>
        <end position="257"/>
    </location>
</feature>
<feature type="strand" evidence="6">
    <location>
        <begin position="259"/>
        <end position="265"/>
    </location>
</feature>
<feature type="helix" evidence="6">
    <location>
        <begin position="273"/>
        <end position="276"/>
    </location>
</feature>
<feature type="helix" evidence="6">
    <location>
        <begin position="277"/>
        <end position="284"/>
    </location>
</feature>
<feature type="strand" evidence="6">
    <location>
        <begin position="287"/>
        <end position="290"/>
    </location>
</feature>
<feature type="strand" evidence="6">
    <location>
        <begin position="292"/>
        <end position="298"/>
    </location>
</feature>
<feature type="strand" evidence="6">
    <location>
        <begin position="306"/>
        <end position="308"/>
    </location>
</feature>
<feature type="turn" evidence="6">
    <location>
        <begin position="313"/>
        <end position="315"/>
    </location>
</feature>
<feature type="helix" evidence="6">
    <location>
        <begin position="316"/>
        <end position="322"/>
    </location>
</feature>
<feature type="helix" evidence="6">
    <location>
        <begin position="323"/>
        <end position="325"/>
    </location>
</feature>
<feature type="strand" evidence="6">
    <location>
        <begin position="326"/>
        <end position="328"/>
    </location>
</feature>
<feature type="strand" evidence="6">
    <location>
        <begin position="330"/>
        <end position="334"/>
    </location>
</feature>
<feature type="helix" evidence="6">
    <location>
        <begin position="336"/>
        <end position="340"/>
    </location>
</feature>
<feature type="strand" evidence="6">
    <location>
        <begin position="341"/>
        <end position="343"/>
    </location>
</feature>
<feature type="helix" evidence="6">
    <location>
        <begin position="345"/>
        <end position="355"/>
    </location>
</feature>
<feature type="strand" evidence="6">
    <location>
        <begin position="359"/>
        <end position="362"/>
    </location>
</feature>
<feature type="strand" evidence="6">
    <location>
        <begin position="364"/>
        <end position="370"/>
    </location>
</feature>
<feature type="helix" evidence="6">
    <location>
        <begin position="386"/>
        <end position="393"/>
    </location>
</feature>
<feature type="helix" evidence="6">
    <location>
        <begin position="394"/>
        <end position="397"/>
    </location>
</feature>
<feature type="strand" evidence="6">
    <location>
        <begin position="398"/>
        <end position="400"/>
    </location>
</feature>
<feature type="strand" evidence="6">
    <location>
        <begin position="402"/>
        <end position="406"/>
    </location>
</feature>
<feature type="helix" evidence="6">
    <location>
        <begin position="407"/>
        <end position="412"/>
    </location>
</feature>
<feature type="helix" evidence="6">
    <location>
        <begin position="417"/>
        <end position="424"/>
    </location>
</feature>
<gene>
    <name evidence="1" type="primary">aroA</name>
    <name type="ordered locus">VC_1732</name>
</gene>
<reference key="1">
    <citation type="journal article" date="2000" name="Nature">
        <title>DNA sequence of both chromosomes of the cholera pathogen Vibrio cholerae.</title>
        <authorList>
            <person name="Heidelberg J.F."/>
            <person name="Eisen J.A."/>
            <person name="Nelson W.C."/>
            <person name="Clayton R.A."/>
            <person name="Gwinn M.L."/>
            <person name="Dodson R.J."/>
            <person name="Haft D.H."/>
            <person name="Hickey E.K."/>
            <person name="Peterson J.D."/>
            <person name="Umayam L.A."/>
            <person name="Gill S.R."/>
            <person name="Nelson K.E."/>
            <person name="Read T.D."/>
            <person name="Tettelin H."/>
            <person name="Richardson D.L."/>
            <person name="Ermolaeva M.D."/>
            <person name="Vamathevan J.J."/>
            <person name="Bass S."/>
            <person name="Qin H."/>
            <person name="Dragoi I."/>
            <person name="Sellers P."/>
            <person name="McDonald L.A."/>
            <person name="Utterback T.R."/>
            <person name="Fleischmann R.D."/>
            <person name="Nierman W.C."/>
            <person name="White O."/>
            <person name="Salzberg S.L."/>
            <person name="Smith H.O."/>
            <person name="Colwell R.R."/>
            <person name="Mekalanos J.J."/>
            <person name="Venter J.C."/>
            <person name="Fraser C.M."/>
        </authorList>
    </citation>
    <scope>NUCLEOTIDE SEQUENCE [LARGE SCALE GENOMIC DNA]</scope>
    <source>
        <strain>ATCC 39315 / El Tor Inaba N16961</strain>
    </source>
</reference>
<reference evidence="4" key="2">
    <citation type="submission" date="2010-07" db="PDB data bank">
        <title>1.02 Angstrom resolution crystal structure of 3-phosphoshikimate 1-carboxyvinyltransferase from Vibrio cholerae in complex with shikimate-3-phosphate (partially hotolyzed) and glyphosate.</title>
        <authorList>
            <consortium name="Center for Structural Genomics of Infectious Diseases (CSGID)"/>
            <person name="Minasov G."/>
            <person name="Light S.H."/>
            <person name="Halavaty A."/>
            <person name="Shuvalova G."/>
            <person name="Papazisi L."/>
            <person name="Anderson W.F."/>
        </authorList>
    </citation>
    <scope>X-RAY CRYSTALLOGRAPHY (1.02 ANGSTROMS) IN COMPLEX WITH SHIKIMATE-3-PHOSPHATE AND GLYPHOSATE</scope>
</reference>
<reference evidence="5" key="3">
    <citation type="submission" date="2011-08" db="PDB data bank">
        <title>1.90 Angstrom resolution crystal structure of N-terminal domain 3-phosphoshikimate 1-carboxyvinyltransferase from Vibrio cholerae.</title>
        <authorList>
            <consortium name="Center for Structural Genomics of Infectious Diseases (CSGID)"/>
            <person name="Light S.H."/>
            <person name="Minasov G."/>
            <person name="Halavaty A.S."/>
            <person name="Shuvalova L."/>
            <person name="Papazisi L."/>
            <person name="Anderson W.F."/>
        </authorList>
    </citation>
    <scope>X-RAY CRYSTALLOGRAPHY (1.90 ANGSTROMS) OF 16-243</scope>
    <scope>SUBUNIT</scope>
</reference>
<keyword id="KW-0002">3D-structure</keyword>
<keyword id="KW-0028">Amino-acid biosynthesis</keyword>
<keyword id="KW-0057">Aromatic amino acid biosynthesis</keyword>
<keyword id="KW-0963">Cytoplasm</keyword>
<keyword id="KW-1185">Reference proteome</keyword>
<keyword id="KW-0808">Transferase</keyword>